<evidence type="ECO:0000250" key="1"/>
<evidence type="ECO:0000250" key="2">
    <source>
        <dbReference type="UniProtKB" id="O00763"/>
    </source>
</evidence>
<evidence type="ECO:0000250" key="3">
    <source>
        <dbReference type="UniProtKB" id="Q13085"/>
    </source>
</evidence>
<evidence type="ECO:0000250" key="4">
    <source>
        <dbReference type="UniProtKB" id="Q5SWU9"/>
    </source>
</evidence>
<evidence type="ECO:0000255" key="5">
    <source>
        <dbReference type="PROSITE-ProRule" id="PRU00409"/>
    </source>
</evidence>
<evidence type="ECO:0000255" key="6">
    <source>
        <dbReference type="PROSITE-ProRule" id="PRU01066"/>
    </source>
</evidence>
<evidence type="ECO:0000255" key="7">
    <source>
        <dbReference type="PROSITE-ProRule" id="PRU01136"/>
    </source>
</evidence>
<evidence type="ECO:0000255" key="8">
    <source>
        <dbReference type="PROSITE-ProRule" id="PRU01137"/>
    </source>
</evidence>
<evidence type="ECO:0000255" key="9">
    <source>
        <dbReference type="PROSITE-ProRule" id="PRU01138"/>
    </source>
</evidence>
<evidence type="ECO:0000256" key="10">
    <source>
        <dbReference type="SAM" id="MobiDB-lite"/>
    </source>
</evidence>
<evidence type="ECO:0000269" key="11">
    <source>
    </source>
</evidence>
<evidence type="ECO:0000269" key="12">
    <source ref="3"/>
</evidence>
<comment type="function">
    <text evidence="3">Catalyzes the rate-limiting reaction in the biogenesis of long-chain fatty acids. Carries out three functions: biotin carboxyl carrier protein, biotin carboxylase and carboxyltransferase.</text>
</comment>
<comment type="catalytic activity">
    <reaction evidence="4">
        <text>hydrogencarbonate + acetyl-CoA + ATP = malonyl-CoA + ADP + phosphate + H(+)</text>
        <dbReference type="Rhea" id="RHEA:11308"/>
        <dbReference type="ChEBI" id="CHEBI:15378"/>
        <dbReference type="ChEBI" id="CHEBI:17544"/>
        <dbReference type="ChEBI" id="CHEBI:30616"/>
        <dbReference type="ChEBI" id="CHEBI:43474"/>
        <dbReference type="ChEBI" id="CHEBI:57288"/>
        <dbReference type="ChEBI" id="CHEBI:57384"/>
        <dbReference type="ChEBI" id="CHEBI:456216"/>
        <dbReference type="EC" id="6.4.1.2"/>
    </reaction>
</comment>
<comment type="catalytic activity">
    <reaction evidence="4">
        <text>N(6)-biotinyl-L-lysyl-[protein] + hydrogencarbonate + ATP = N(6)-carboxybiotinyl-L-lysyl-[protein] + ADP + phosphate + H(+)</text>
        <dbReference type="Rhea" id="RHEA:13501"/>
        <dbReference type="Rhea" id="RHEA-COMP:10505"/>
        <dbReference type="Rhea" id="RHEA-COMP:10506"/>
        <dbReference type="ChEBI" id="CHEBI:15378"/>
        <dbReference type="ChEBI" id="CHEBI:17544"/>
        <dbReference type="ChEBI" id="CHEBI:30616"/>
        <dbReference type="ChEBI" id="CHEBI:43474"/>
        <dbReference type="ChEBI" id="CHEBI:83144"/>
        <dbReference type="ChEBI" id="CHEBI:83145"/>
        <dbReference type="ChEBI" id="CHEBI:456216"/>
        <dbReference type="EC" id="6.3.4.14"/>
    </reaction>
</comment>
<comment type="cofactor">
    <cofactor evidence="2">
        <name>biotin</name>
        <dbReference type="ChEBI" id="CHEBI:57586"/>
    </cofactor>
</comment>
<comment type="cofactor">
    <cofactor evidence="1">
        <name>Mn(2+)</name>
        <dbReference type="ChEBI" id="CHEBI:29035"/>
    </cofactor>
    <text evidence="1">Binds 2 manganese ions per subunit.</text>
</comment>
<comment type="activity regulation">
    <text>By phosphorylation.</text>
</comment>
<comment type="pathway">
    <text>Lipid metabolism; malonyl-CoA biosynthesis; malonyl-CoA from acetyl-CoA: step 1/1.</text>
</comment>
<comment type="subcellular location">
    <subcellularLocation>
        <location>Cytoplasm</location>
    </subcellularLocation>
</comment>
<gene>
    <name type="primary">ACAC</name>
</gene>
<reference key="1">
    <citation type="journal article" date="1988" name="J. Biol. Chem.">
        <title>Primary structure of chicken liver acetyl-CoA carboxylase deduced from cDNA sequence.</title>
        <authorList>
            <person name="Takai T."/>
            <person name="Yokoyama C."/>
            <person name="Wada K."/>
            <person name="Tanabe T."/>
        </authorList>
    </citation>
    <scope>NUCLEOTIDE SEQUENCE [MRNA]</scope>
    <scope>PARTIAL PROTEIN SEQUENCE</scope>
    <scope>BIOTINYLATION AT LYS-786</scope>
    <source>
        <tissue>Liver</tissue>
    </source>
</reference>
<reference key="2">
    <citation type="journal article" date="1987" name="FEBS Lett.">
        <title>Primary structure of the biotin-binding site of chicken liver acetyl-CoA carboxylase.</title>
        <authorList>
            <person name="Takai T."/>
            <person name="Wada K."/>
            <person name="Tanabe T."/>
        </authorList>
    </citation>
    <scope>NUCLEOTIDE SEQUENCE [MRNA] OF 493-820</scope>
    <source>
        <tissue>Liver</tissue>
    </source>
</reference>
<reference key="3">
    <citation type="submission" date="2007-01" db="UniProtKB">
        <authorList>
            <person name="Bienvenut W.V."/>
            <person name="Black E.J."/>
            <person name="Gillespie D.A."/>
        </authorList>
    </citation>
    <scope>PROTEIN SEQUENCE OF 1-18; 99-111; 121-132; 153-163; 278-288; 300-311; 336-350; 589-607; 742-755; 826-845; 1083-1096; 1147-1155; 1157-1169; 1233-1239; 1275-1286; 1319-1326; 1349-1362; 1365-1377; 1387-1397; 1653-1678; 1701-1708; 1727-1737; 1759-1775; 1801-1810; 1815-1833; 1882-1891; 1899-1906; 1955-1986; 2040-2049; 2067-2080; 2092-2104; 2177-2186; 2190-2195; 2199-2206 AND 2209-2226</scope>
    <scope>ACETYLATION AT MET-1</scope>
    <scope>IDENTIFICATION BY MASS SPECTROMETRY</scope>
    <source>
        <tissue>B-cell lymphoma</tissue>
    </source>
</reference>
<feature type="chain" id="PRO_0000146768" description="Acetyl-CoA carboxylase">
    <location>
        <begin position="1"/>
        <end position="2324"/>
    </location>
</feature>
<feature type="domain" description="Biotin carboxylation">
    <location>
        <begin position="117"/>
        <end position="618"/>
    </location>
</feature>
<feature type="domain" description="ATP-grasp" evidence="5">
    <location>
        <begin position="275"/>
        <end position="466"/>
    </location>
</feature>
<feature type="domain" description="Biotinyl-binding" evidence="6">
    <location>
        <begin position="745"/>
        <end position="819"/>
    </location>
</feature>
<feature type="domain" description="CoA carboxyltransferase N-terminal" evidence="7">
    <location>
        <begin position="1553"/>
        <end position="1891"/>
    </location>
</feature>
<feature type="domain" description="CoA carboxyltransferase C-terminal" evidence="8">
    <location>
        <begin position="1895"/>
        <end position="2211"/>
    </location>
</feature>
<feature type="region of interest" description="Disordered" evidence="10">
    <location>
        <begin position="1"/>
        <end position="34"/>
    </location>
</feature>
<feature type="region of interest" description="Carboxyltransferase" evidence="9">
    <location>
        <begin position="1553"/>
        <end position="2211"/>
    </location>
</feature>
<feature type="active site" evidence="1">
    <location>
        <position position="441"/>
    </location>
</feature>
<feature type="binding site" evidence="5">
    <location>
        <begin position="315"/>
        <end position="320"/>
    </location>
    <ligand>
        <name>ATP</name>
        <dbReference type="ChEBI" id="CHEBI:30616"/>
    </ligand>
</feature>
<feature type="binding site" evidence="1">
    <location>
        <position position="424"/>
    </location>
    <ligand>
        <name>Mn(2+)</name>
        <dbReference type="ChEBI" id="CHEBI:29035"/>
        <label>1</label>
    </ligand>
</feature>
<feature type="binding site" evidence="1">
    <location>
        <position position="437"/>
    </location>
    <ligand>
        <name>Mn(2+)</name>
        <dbReference type="ChEBI" id="CHEBI:29035"/>
        <label>1</label>
    </ligand>
</feature>
<feature type="binding site" evidence="1">
    <location>
        <position position="437"/>
    </location>
    <ligand>
        <name>Mn(2+)</name>
        <dbReference type="ChEBI" id="CHEBI:29035"/>
        <label>2</label>
    </ligand>
</feature>
<feature type="binding site" evidence="1">
    <location>
        <position position="439"/>
    </location>
    <ligand>
        <name>Mn(2+)</name>
        <dbReference type="ChEBI" id="CHEBI:29035"/>
        <label>2</label>
    </ligand>
</feature>
<feature type="binding site" evidence="1">
    <location>
        <position position="1800"/>
    </location>
    <ligand>
        <name>CoA</name>
        <dbReference type="ChEBI" id="CHEBI:57287"/>
    </ligand>
</feature>
<feature type="binding site" evidence="1">
    <location>
        <position position="2104"/>
    </location>
    <ligand>
        <name>CoA</name>
        <dbReference type="ChEBI" id="CHEBI:57287"/>
    </ligand>
</feature>
<feature type="binding site" evidence="1">
    <location>
        <position position="2106"/>
    </location>
    <ligand>
        <name>CoA</name>
        <dbReference type="ChEBI" id="CHEBI:57287"/>
    </ligand>
</feature>
<feature type="modified residue" description="N-acetylmethionine" evidence="12">
    <location>
        <position position="1"/>
    </location>
</feature>
<feature type="modified residue" description="Phosphoserine" evidence="1">
    <location>
        <position position="78"/>
    </location>
</feature>
<feature type="modified residue" description="Phosphoserine" evidence="1">
    <location>
        <position position="80"/>
    </location>
</feature>
<feature type="modified residue" description="N6-biotinyllysine" evidence="6 11">
    <location>
        <position position="786"/>
    </location>
</feature>
<feature type="modified residue" description="Phosphoserine" evidence="1">
    <location>
        <position position="1193"/>
    </location>
</feature>
<sequence length="2324" mass="262720">MEESSQPAKPLEMNPHSRFIIGSVSEDNSEDETSSLVKLDLLEEKERSLSPVSVCSDSLSDLGLPSAQDGLANHMRPSMSGLHLVKQGRDRKKVDVQRDFTVASPAEFVTRFGGNRVIEKVLIANNGIAAVKCMRSIRRWSYEMFRNERAIRFVVMVTPEDLKANAEYIKMADHYVPVPGGPNNNNYANVELILDIAKRIPVQAVWAGWGHASENPKLPELLHKNGIAFMGPPSQAMWALGDKIASSIVAQTAGIPTLPWNGSGLRVDWQENDLQKRILNVPQELYEKGYVKDADDGLRAAEEVGYPVMIKASEGGGGKGIRKVNNADDFPNLFRQVQAEVPGSPIFVMRLAKQSRHLEVQILADQYGNAISLFGRDCSVQRRHQKIIEEAPASIATSVVFEHMEQCAVKLAKMVGYVSAGTVEYLYSQDGSFYFLELNPRLQVEHPCTEMVADVNLPAAQLQIAMGIPLHRIKDIRVMYGVSPWGDGSIDFENSAHVPCPRGHVIAARITSENPDEGFKPSSGTVQELNFRSNKNVWGYFSVAAAGGLHEFADSQFGHCFSWGENREEAISNMVVALKELSIRGDFRTTVEYLIKLLETESFQQNRIDTGWLDRLIAEKVQAERPDTMLGVVCGALHVADVSFRNSVSNFLHSLERGQVLPAHTLLNTVDVELIYEGRKYVLKVTRQSPNSYVVIMNSSCVEVDVHRLSDGGLLLSYDGSSYTTYMKEEVDRYRITIGNKTCVFEKENDPSILRSPSAGKLIQYVVEDGGHVFAGQCFAEIEVMKMVMTLTAGESGCIHYVKRPGAVLDPGCVIAKLQLDDPSRVQQAELHTGTLPQIQSTALRGEKLHRIFHYVLDNLVNVMNGYCLPEPYFSSKVKGWVERLMKTLRDPSLPLLELQDIMTSVSGRIPPNVEKSIKKEMAQYASNITSVLCQFPSQQIANILDSHAATLNRKSEREVFFMNTQSIVQLVQRYRSGIRGHMKAVVMDLLRQYLKVETQFQHGHYDKCVFALREENKSDMNAVLNYIFSHAQVTKKNLLVTMLIDQLCGRDPTLTDELINILTELTQLSKTTNAKVALRARQVLIASHLPSYELRHNQVESIFLSAIDMYGHQFCIENLQKLILSETSIFDVLPNFFYHSNQVVRMAALEVYVRRAYIAYELNSVQHRQLKDNTCVVEFQFMLPTSHPNRMSFSSNLNHYGMVHVASVSDVLLDNSFTPPCQRMGGMVSFRTFEDFVRIFDEVMSCFCDSPPQSPTFPEAGHASLYDEDKAAREEPIHILNVAIKTDGDVDDDGLAAMFREFTQSKKSVLIEHGIRRLTFLVAQKREFPKFFTFRARDKFEEDRIYRHLEPALAFQLELNRMRNFDLTAIPCANHKMHLYLGAAKVEVGTEVTDYRFFVRAIIRHSDLVTKEASFEYLQNEGERLLLEAMDELEVAFNNTNVRTDCNHIFLNFVPTVIMDPSKIEESVRSMVMRYGSRLWKLRVLQAELKINIRLTPTGKAIPIRLFLTNESGYYLDISLYKEVTDSRTGQIMFQAYGDKQGPLHGMLINTPYVTKDLLQSKRFQAQSLGTSYVYDIPEMFRQSLIKLWDSMNEHAFLPTPPLPSDILTYTELVLDDQGQLVHMNRLPGGNEIGMVAWKMTLKTPEYPEGRDIIVIGNDITYRIGSFGPQEDVLFLRASELARTHGIPRIYVAANSGARIGLAEEIRHMFHVAWEDPDDPYKGYKYLYLTPQDYKKVSALNSVHCEHVEDNGESRYKITDIIGKEDGLGIENLRGSGMIAGESSLAYESIITINLVTCRAIGIGAYLVRLGQRTIQVENSHIILTGCGALNKVLGREVYTSNNQLGGIQIMHNNGVTHGTVCDDFEGVYTILLWLSYMPKSVYSPVPILKVKDPIDRTIDFVPTKTPYDPRWMLAGRPNPSQKGQWQSGFFDNGSFLEIMQPWAQTVVVGRARLGGIPVGVVAVETRTVELSIPADPANLDSEAKIIQQAGQVWFPDSAFKTAQAINDFNREGLPLMVFANWRGFSGGMKDMYDQVLKFGAYIVDGLREYRQPVLIYIPPQAELRGGSWAVIDPTINPRHMEMYADRESRGGILEPEGTVEIKFRRKDLVKTMRRVDPVYMRLAERLGTPELSAADRKDLESKLKEREEFLIPIYHQVAMQFADLHDTPGRMQEKGAITDILDWKTSRTFFYWRLRRLLLEDVVKKKIHDANPELTDGQIQAMLRRWFVEVEGTVKAYLWDSNKDLVEWLEKQLMEEEGVRSVVDENIKYISRDYILKQIRSLVQANPEVAMDSIVHMTQHISPTQRAEIVRILSTMDSPSST</sequence>
<keyword id="KW-0007">Acetylation</keyword>
<keyword id="KW-0067">ATP-binding</keyword>
<keyword id="KW-0092">Biotin</keyword>
<keyword id="KW-0963">Cytoplasm</keyword>
<keyword id="KW-0903">Direct protein sequencing</keyword>
<keyword id="KW-0275">Fatty acid biosynthesis</keyword>
<keyword id="KW-0276">Fatty acid metabolism</keyword>
<keyword id="KW-0436">Ligase</keyword>
<keyword id="KW-0444">Lipid biosynthesis</keyword>
<keyword id="KW-0443">Lipid metabolism</keyword>
<keyword id="KW-0464">Manganese</keyword>
<keyword id="KW-0479">Metal-binding</keyword>
<keyword id="KW-0511">Multifunctional enzyme</keyword>
<keyword id="KW-0547">Nucleotide-binding</keyword>
<keyword id="KW-0597">Phosphoprotein</keyword>
<keyword id="KW-1185">Reference proteome</keyword>
<protein>
    <recommendedName>
        <fullName>Acetyl-CoA carboxylase</fullName>
        <shortName>ACC</shortName>
        <ecNumber>6.4.1.2</ecNumber>
    </recommendedName>
    <domain>
        <recommendedName>
            <fullName>Biotin carboxylase</fullName>
            <ecNumber>6.3.4.14</ecNumber>
        </recommendedName>
    </domain>
</protein>
<organism>
    <name type="scientific">Gallus gallus</name>
    <name type="common">Chicken</name>
    <dbReference type="NCBI Taxonomy" id="9031"/>
    <lineage>
        <taxon>Eukaryota</taxon>
        <taxon>Metazoa</taxon>
        <taxon>Chordata</taxon>
        <taxon>Craniata</taxon>
        <taxon>Vertebrata</taxon>
        <taxon>Euteleostomi</taxon>
        <taxon>Archelosauria</taxon>
        <taxon>Archosauria</taxon>
        <taxon>Dinosauria</taxon>
        <taxon>Saurischia</taxon>
        <taxon>Theropoda</taxon>
        <taxon>Coelurosauria</taxon>
        <taxon>Aves</taxon>
        <taxon>Neognathae</taxon>
        <taxon>Galloanserae</taxon>
        <taxon>Galliformes</taxon>
        <taxon>Phasianidae</taxon>
        <taxon>Phasianinae</taxon>
        <taxon>Gallus</taxon>
    </lineage>
</organism>
<dbReference type="EC" id="6.4.1.2"/>
<dbReference type="EC" id="6.3.4.14"/>
<dbReference type="EMBL" id="J03541">
    <property type="protein sequence ID" value="AAA48701.1"/>
    <property type="molecule type" value="mRNA"/>
</dbReference>
<dbReference type="EMBL" id="X05019">
    <property type="protein sequence ID" value="CAA28675.1"/>
    <property type="molecule type" value="mRNA"/>
</dbReference>
<dbReference type="PIR" id="A29924">
    <property type="entry name" value="A29924"/>
</dbReference>
<dbReference type="RefSeq" id="NP_990836.1">
    <property type="nucleotide sequence ID" value="NM_205505.1"/>
</dbReference>
<dbReference type="SMR" id="P11029"/>
<dbReference type="BioGRID" id="676751">
    <property type="interactions" value="1"/>
</dbReference>
<dbReference type="FunCoup" id="P11029">
    <property type="interactions" value="1592"/>
</dbReference>
<dbReference type="STRING" id="9031.ENSGALP00000043760"/>
<dbReference type="PaxDb" id="9031-ENSGALP00000034072"/>
<dbReference type="GeneID" id="396504"/>
<dbReference type="KEGG" id="gga:396504"/>
<dbReference type="CTD" id="31"/>
<dbReference type="VEuPathDB" id="HostDB:geneid_396504"/>
<dbReference type="eggNOG" id="KOG0368">
    <property type="taxonomic scope" value="Eukaryota"/>
</dbReference>
<dbReference type="InParanoid" id="P11029"/>
<dbReference type="OrthoDB" id="14612at2759"/>
<dbReference type="PhylomeDB" id="P11029"/>
<dbReference type="SABIO-RK" id="P11029"/>
<dbReference type="UniPathway" id="UPA00655">
    <property type="reaction ID" value="UER00711"/>
</dbReference>
<dbReference type="PRO" id="PR:P11029"/>
<dbReference type="Proteomes" id="UP000000539">
    <property type="component" value="Unassembled WGS sequence"/>
</dbReference>
<dbReference type="GO" id="GO:0005737">
    <property type="term" value="C:cytoplasm"/>
    <property type="evidence" value="ECO:0000304"/>
    <property type="project" value="AgBase"/>
</dbReference>
<dbReference type="GO" id="GO:0005739">
    <property type="term" value="C:mitochondrion"/>
    <property type="evidence" value="ECO:0000318"/>
    <property type="project" value="GO_Central"/>
</dbReference>
<dbReference type="GO" id="GO:0003989">
    <property type="term" value="F:acetyl-CoA carboxylase activity"/>
    <property type="evidence" value="ECO:0000314"/>
    <property type="project" value="AgBase"/>
</dbReference>
<dbReference type="GO" id="GO:0005524">
    <property type="term" value="F:ATP binding"/>
    <property type="evidence" value="ECO:0000314"/>
    <property type="project" value="AgBase"/>
</dbReference>
<dbReference type="GO" id="GO:0009374">
    <property type="term" value="F:biotin binding"/>
    <property type="evidence" value="ECO:0000314"/>
    <property type="project" value="AgBase"/>
</dbReference>
<dbReference type="GO" id="GO:0004075">
    <property type="term" value="F:biotin carboxylase activity"/>
    <property type="evidence" value="ECO:0000314"/>
    <property type="project" value="AgBase"/>
</dbReference>
<dbReference type="GO" id="GO:0050692">
    <property type="term" value="F:DNA binding domain binding"/>
    <property type="evidence" value="ECO:0000314"/>
    <property type="project" value="AgBase"/>
</dbReference>
<dbReference type="GO" id="GO:0046872">
    <property type="term" value="F:metal ion binding"/>
    <property type="evidence" value="ECO:0007669"/>
    <property type="project" value="UniProtKB-KW"/>
</dbReference>
<dbReference type="GO" id="GO:0046966">
    <property type="term" value="F:nuclear thyroid hormone receptor binding"/>
    <property type="evidence" value="ECO:0000304"/>
    <property type="project" value="AgBase"/>
</dbReference>
<dbReference type="GO" id="GO:0005102">
    <property type="term" value="F:signaling receptor binding"/>
    <property type="evidence" value="ECO:0000304"/>
    <property type="project" value="AgBase"/>
</dbReference>
<dbReference type="GO" id="GO:0032810">
    <property type="term" value="F:sterol response element binding"/>
    <property type="evidence" value="ECO:0000304"/>
    <property type="project" value="AgBase"/>
</dbReference>
<dbReference type="GO" id="GO:0040029">
    <property type="term" value="P:epigenetic regulation of gene expression"/>
    <property type="evidence" value="ECO:0000314"/>
    <property type="project" value="AgBase"/>
</dbReference>
<dbReference type="GO" id="GO:0006633">
    <property type="term" value="P:fatty acid biosynthetic process"/>
    <property type="evidence" value="ECO:0000314"/>
    <property type="project" value="AgBase"/>
</dbReference>
<dbReference type="GO" id="GO:2001295">
    <property type="term" value="P:malonyl-CoA biosynthetic process"/>
    <property type="evidence" value="ECO:0000314"/>
    <property type="project" value="AgBase"/>
</dbReference>
<dbReference type="GO" id="GO:0045893">
    <property type="term" value="P:positive regulation of DNA-templated transcription"/>
    <property type="evidence" value="ECO:0000315"/>
    <property type="project" value="AgBase"/>
</dbReference>
<dbReference type="GO" id="GO:0010628">
    <property type="term" value="P:positive regulation of gene expression"/>
    <property type="evidence" value="ECO:0000314"/>
    <property type="project" value="AgBase"/>
</dbReference>
<dbReference type="GO" id="GO:0065008">
    <property type="term" value="P:regulation of biological quality"/>
    <property type="evidence" value="ECO:0000314"/>
    <property type="project" value="AgBase"/>
</dbReference>
<dbReference type="GO" id="GO:0009743">
    <property type="term" value="P:response to carbohydrate"/>
    <property type="evidence" value="ECO:0000314"/>
    <property type="project" value="AgBase"/>
</dbReference>
<dbReference type="GO" id="GO:0070542">
    <property type="term" value="P:response to fatty acid"/>
    <property type="evidence" value="ECO:0000304"/>
    <property type="project" value="AgBase"/>
</dbReference>
<dbReference type="GO" id="GO:0097066">
    <property type="term" value="P:response to thyroid hormone"/>
    <property type="evidence" value="ECO:0000314"/>
    <property type="project" value="AgBase"/>
</dbReference>
<dbReference type="GO" id="GO:0006810">
    <property type="term" value="P:transport"/>
    <property type="evidence" value="ECO:0000304"/>
    <property type="project" value="AgBase"/>
</dbReference>
<dbReference type="CDD" id="cd06850">
    <property type="entry name" value="biotinyl_domain"/>
    <property type="match status" value="1"/>
</dbReference>
<dbReference type="FunFam" id="2.40.460.10:FF:000001">
    <property type="entry name" value="Acetyl-CoA carboxylase 1"/>
    <property type="match status" value="1"/>
</dbReference>
<dbReference type="FunFam" id="2.40.50.100:FF:000005">
    <property type="entry name" value="Acetyl-CoA carboxylase 1"/>
    <property type="match status" value="1"/>
</dbReference>
<dbReference type="FunFam" id="3.30.470.20:FF:000005">
    <property type="entry name" value="Acetyl-CoA carboxylase 1"/>
    <property type="match status" value="1"/>
</dbReference>
<dbReference type="FunFam" id="3.90.1770.10:FF:000001">
    <property type="entry name" value="acetyl-CoA carboxylase 1"/>
    <property type="match status" value="1"/>
</dbReference>
<dbReference type="FunFam" id="3.30.1490.20:FF:000003">
    <property type="entry name" value="acetyl-CoA carboxylase isoform X1"/>
    <property type="match status" value="1"/>
</dbReference>
<dbReference type="FunFam" id="3.40.50.20:FF:000005">
    <property type="entry name" value="acetyl-CoA carboxylase isoform X2"/>
    <property type="match status" value="1"/>
</dbReference>
<dbReference type="FunFam" id="3.90.226.10:FF:000010">
    <property type="entry name" value="acetyl-CoA carboxylase isoform X2"/>
    <property type="match status" value="1"/>
</dbReference>
<dbReference type="Gene3D" id="2.40.50.100">
    <property type="match status" value="1"/>
</dbReference>
<dbReference type="Gene3D" id="3.40.50.20">
    <property type="match status" value="1"/>
</dbReference>
<dbReference type="Gene3D" id="3.90.226.10">
    <property type="entry name" value="2-enoyl-CoA Hydratase, Chain A, domain 1"/>
    <property type="match status" value="2"/>
</dbReference>
<dbReference type="Gene3D" id="3.30.1490.20">
    <property type="entry name" value="ATP-grasp fold, A domain"/>
    <property type="match status" value="1"/>
</dbReference>
<dbReference type="Gene3D" id="3.30.470.20">
    <property type="entry name" value="ATP-grasp fold, B domain"/>
    <property type="match status" value="1"/>
</dbReference>
<dbReference type="Gene3D" id="2.40.460.10">
    <property type="entry name" value="Biotin dependent carboxylase carboxyltransferase"/>
    <property type="match status" value="1"/>
</dbReference>
<dbReference type="Gene3D" id="3.90.1770.10">
    <property type="entry name" value="PreATP-grasp domain"/>
    <property type="match status" value="1"/>
</dbReference>
<dbReference type="InterPro" id="IPR049076">
    <property type="entry name" value="ACCA"/>
</dbReference>
<dbReference type="InterPro" id="IPR049074">
    <property type="entry name" value="ACCA_BT"/>
</dbReference>
<dbReference type="InterPro" id="IPR034733">
    <property type="entry name" value="AcCoA_carboxyl_beta"/>
</dbReference>
<dbReference type="InterPro" id="IPR013537">
    <property type="entry name" value="AcCoA_COase_cen"/>
</dbReference>
<dbReference type="InterPro" id="IPR011761">
    <property type="entry name" value="ATP-grasp"/>
</dbReference>
<dbReference type="InterPro" id="IPR013815">
    <property type="entry name" value="ATP_grasp_subdomain_1"/>
</dbReference>
<dbReference type="InterPro" id="IPR005481">
    <property type="entry name" value="BC-like_N"/>
</dbReference>
<dbReference type="InterPro" id="IPR001882">
    <property type="entry name" value="Biotin_BS"/>
</dbReference>
<dbReference type="InterPro" id="IPR011764">
    <property type="entry name" value="Biotin_carboxylation_dom"/>
</dbReference>
<dbReference type="InterPro" id="IPR005482">
    <property type="entry name" value="Biotin_COase_C"/>
</dbReference>
<dbReference type="InterPro" id="IPR000089">
    <property type="entry name" value="Biotin_lipoyl"/>
</dbReference>
<dbReference type="InterPro" id="IPR005479">
    <property type="entry name" value="CbamoylP_synth_lsu-like_ATP-bd"/>
</dbReference>
<dbReference type="InterPro" id="IPR029045">
    <property type="entry name" value="ClpP/crotonase-like_dom_sf"/>
</dbReference>
<dbReference type="InterPro" id="IPR011763">
    <property type="entry name" value="COA_CT_C"/>
</dbReference>
<dbReference type="InterPro" id="IPR011762">
    <property type="entry name" value="COA_CT_N"/>
</dbReference>
<dbReference type="InterPro" id="IPR016185">
    <property type="entry name" value="PreATP-grasp_dom_sf"/>
</dbReference>
<dbReference type="InterPro" id="IPR011054">
    <property type="entry name" value="Rudment_hybrid_motif"/>
</dbReference>
<dbReference type="InterPro" id="IPR011053">
    <property type="entry name" value="Single_hybrid_motif"/>
</dbReference>
<dbReference type="PANTHER" id="PTHR45728:SF5">
    <property type="entry name" value="ACETYL-COA CARBOXYLASE 1"/>
    <property type="match status" value="1"/>
</dbReference>
<dbReference type="PANTHER" id="PTHR45728">
    <property type="entry name" value="ACETYL-COA CARBOXYLASE, ISOFORM A"/>
    <property type="match status" value="1"/>
</dbReference>
<dbReference type="Pfam" id="PF08326">
    <property type="entry name" value="ACC_central"/>
    <property type="match status" value="1"/>
</dbReference>
<dbReference type="Pfam" id="PF21385">
    <property type="entry name" value="ACCA_BT"/>
    <property type="match status" value="1"/>
</dbReference>
<dbReference type="Pfam" id="PF02785">
    <property type="entry name" value="Biotin_carb_C"/>
    <property type="match status" value="1"/>
</dbReference>
<dbReference type="Pfam" id="PF00289">
    <property type="entry name" value="Biotin_carb_N"/>
    <property type="match status" value="1"/>
</dbReference>
<dbReference type="Pfam" id="PF00364">
    <property type="entry name" value="Biotin_lipoyl"/>
    <property type="match status" value="1"/>
</dbReference>
<dbReference type="Pfam" id="PF01039">
    <property type="entry name" value="Carboxyl_trans"/>
    <property type="match status" value="1"/>
</dbReference>
<dbReference type="Pfam" id="PF02786">
    <property type="entry name" value="CPSase_L_D2"/>
    <property type="match status" value="1"/>
</dbReference>
<dbReference type="SMART" id="SM00878">
    <property type="entry name" value="Biotin_carb_C"/>
    <property type="match status" value="1"/>
</dbReference>
<dbReference type="SUPFAM" id="SSF52096">
    <property type="entry name" value="ClpP/crotonase"/>
    <property type="match status" value="2"/>
</dbReference>
<dbReference type="SUPFAM" id="SSF56059">
    <property type="entry name" value="Glutathione synthetase ATP-binding domain-like"/>
    <property type="match status" value="1"/>
</dbReference>
<dbReference type="SUPFAM" id="SSF52440">
    <property type="entry name" value="PreATP-grasp domain"/>
    <property type="match status" value="1"/>
</dbReference>
<dbReference type="SUPFAM" id="SSF51246">
    <property type="entry name" value="Rudiment single hybrid motif"/>
    <property type="match status" value="1"/>
</dbReference>
<dbReference type="SUPFAM" id="SSF51230">
    <property type="entry name" value="Single hybrid motif"/>
    <property type="match status" value="1"/>
</dbReference>
<dbReference type="PROSITE" id="PS50975">
    <property type="entry name" value="ATP_GRASP"/>
    <property type="match status" value="1"/>
</dbReference>
<dbReference type="PROSITE" id="PS50979">
    <property type="entry name" value="BC"/>
    <property type="match status" value="1"/>
</dbReference>
<dbReference type="PROSITE" id="PS00188">
    <property type="entry name" value="BIOTIN"/>
    <property type="match status" value="1"/>
</dbReference>
<dbReference type="PROSITE" id="PS50968">
    <property type="entry name" value="BIOTINYL_LIPOYL"/>
    <property type="match status" value="1"/>
</dbReference>
<dbReference type="PROSITE" id="PS50989">
    <property type="entry name" value="COA_CT_CTER"/>
    <property type="match status" value="1"/>
</dbReference>
<dbReference type="PROSITE" id="PS50980">
    <property type="entry name" value="COA_CT_NTER"/>
    <property type="match status" value="1"/>
</dbReference>
<dbReference type="PROSITE" id="PS00866">
    <property type="entry name" value="CPSASE_1"/>
    <property type="match status" value="1"/>
</dbReference>
<dbReference type="PROSITE" id="PS00867">
    <property type="entry name" value="CPSASE_2"/>
    <property type="match status" value="1"/>
</dbReference>
<name>ACAC_CHICK</name>
<proteinExistence type="evidence at protein level"/>
<accession>P11029</accession>